<proteinExistence type="inferred from homology"/>
<protein>
    <recommendedName>
        <fullName evidence="1">Na(+)/H(+) antiporter NhaA 2</fullName>
    </recommendedName>
    <alternativeName>
        <fullName evidence="1">Sodium/proton antiporter NhaA 2</fullName>
    </alternativeName>
</protein>
<sequence length="486" mass="49937">MSQPPPEPGPVRRRTVRRRAIVPGQGRGPGRWSQRLPRGARGADRDGFAAFLRAETTGGLLLLAATVAALVWANTAPGTYHTVWSTPAGLGPSWLHLADMHLTDWVADALLAVFFFTVGLELKRELTLGTLADRRSAALPVAAAAGGMLAPALLCLALTHHTPGAGHAWAIPVATDIAFALGVLSLAGPRVPPGLRTVLLGLAVADDLGGILLIALGLNHGINPAWLATATTLLATTALAHHRRWTSPLLHLPLAAAVWISLHAAGIHPTVAGVALGLLVRVHPDPDEPEAPATRLERHLGPINAAVILPAFALSATGVSLTPHALLHVATDPISRGVAVGLLAGKLLGVPAGAWLAVRLHLARLPDGVRWRHLVPLGLLAGIGYTVSLLITRLALPDPTAVDGASTAILTASVAASALALTALRSPLATVGAPATRGSSRPATQVGGVAGPIPQTRRESDGGPTGGQEPPPARVRRAPPASPHPR</sequence>
<evidence type="ECO:0000255" key="1">
    <source>
        <dbReference type="HAMAP-Rule" id="MF_01844"/>
    </source>
</evidence>
<evidence type="ECO:0000256" key="2">
    <source>
        <dbReference type="SAM" id="MobiDB-lite"/>
    </source>
</evidence>
<accession>Q0RHS2</accession>
<keyword id="KW-0050">Antiport</keyword>
<keyword id="KW-1003">Cell membrane</keyword>
<keyword id="KW-0406">Ion transport</keyword>
<keyword id="KW-0472">Membrane</keyword>
<keyword id="KW-1185">Reference proteome</keyword>
<keyword id="KW-0915">Sodium</keyword>
<keyword id="KW-0739">Sodium transport</keyword>
<keyword id="KW-0812">Transmembrane</keyword>
<keyword id="KW-1133">Transmembrane helix</keyword>
<keyword id="KW-0813">Transport</keyword>
<organism>
    <name type="scientific">Frankia alni (strain DSM 45986 / CECT 9034 / ACN14a)</name>
    <dbReference type="NCBI Taxonomy" id="326424"/>
    <lineage>
        <taxon>Bacteria</taxon>
        <taxon>Bacillati</taxon>
        <taxon>Actinomycetota</taxon>
        <taxon>Actinomycetes</taxon>
        <taxon>Frankiales</taxon>
        <taxon>Frankiaceae</taxon>
        <taxon>Frankia</taxon>
    </lineage>
</organism>
<name>NHAA2_FRAAA</name>
<gene>
    <name evidence="1" type="primary">nhaA2</name>
    <name type="ordered locus">FRAAL4309</name>
</gene>
<dbReference type="EMBL" id="CT573213">
    <property type="protein sequence ID" value="CAJ62951.1"/>
    <property type="molecule type" value="Genomic_DNA"/>
</dbReference>
<dbReference type="SMR" id="Q0RHS2"/>
<dbReference type="STRING" id="326424.FRAAL4309"/>
<dbReference type="KEGG" id="fal:FRAAL4309"/>
<dbReference type="eggNOG" id="COG3004">
    <property type="taxonomic scope" value="Bacteria"/>
</dbReference>
<dbReference type="HOGENOM" id="CLU_015803_0_1_11"/>
<dbReference type="OrthoDB" id="117402at2"/>
<dbReference type="Proteomes" id="UP000000657">
    <property type="component" value="Chromosome"/>
</dbReference>
<dbReference type="GO" id="GO:0005886">
    <property type="term" value="C:plasma membrane"/>
    <property type="evidence" value="ECO:0007669"/>
    <property type="project" value="UniProtKB-SubCell"/>
</dbReference>
<dbReference type="GO" id="GO:0015385">
    <property type="term" value="F:sodium:proton antiporter activity"/>
    <property type="evidence" value="ECO:0007669"/>
    <property type="project" value="TreeGrafter"/>
</dbReference>
<dbReference type="GO" id="GO:0006885">
    <property type="term" value="P:regulation of pH"/>
    <property type="evidence" value="ECO:0007669"/>
    <property type="project" value="InterPro"/>
</dbReference>
<dbReference type="Gene3D" id="1.20.1530.10">
    <property type="entry name" value="Na+/H+ antiporter like domain"/>
    <property type="match status" value="1"/>
</dbReference>
<dbReference type="HAMAP" id="MF_01844">
    <property type="entry name" value="NhaA"/>
    <property type="match status" value="1"/>
</dbReference>
<dbReference type="InterPro" id="IPR023171">
    <property type="entry name" value="Na/H_antiporter_dom_sf"/>
</dbReference>
<dbReference type="InterPro" id="IPR004670">
    <property type="entry name" value="NhaA"/>
</dbReference>
<dbReference type="NCBIfam" id="TIGR00773">
    <property type="entry name" value="NhaA"/>
    <property type="match status" value="1"/>
</dbReference>
<dbReference type="PANTHER" id="PTHR30341:SF0">
    <property type="entry name" value="NA(+)_H(+) ANTIPORTER NHAA"/>
    <property type="match status" value="1"/>
</dbReference>
<dbReference type="PANTHER" id="PTHR30341">
    <property type="entry name" value="SODIUM ION/PROTON ANTIPORTER NHAA-RELATED"/>
    <property type="match status" value="1"/>
</dbReference>
<dbReference type="Pfam" id="PF06965">
    <property type="entry name" value="Na_H_antiport_1"/>
    <property type="match status" value="1"/>
</dbReference>
<reference key="1">
    <citation type="journal article" date="2007" name="Genome Res.">
        <title>Genome characteristics of facultatively symbiotic Frankia sp. strains reflect host range and host plant biogeography.</title>
        <authorList>
            <person name="Normand P."/>
            <person name="Lapierre P."/>
            <person name="Tisa L.S."/>
            <person name="Gogarten J.P."/>
            <person name="Alloisio N."/>
            <person name="Bagnarol E."/>
            <person name="Bassi C.A."/>
            <person name="Berry A.M."/>
            <person name="Bickhart D.M."/>
            <person name="Choisne N."/>
            <person name="Couloux A."/>
            <person name="Cournoyer B."/>
            <person name="Cruveiller S."/>
            <person name="Daubin V."/>
            <person name="Demange N."/>
            <person name="Francino M.P."/>
            <person name="Goltsman E."/>
            <person name="Huang Y."/>
            <person name="Kopp O.R."/>
            <person name="Labarre L."/>
            <person name="Lapidus A."/>
            <person name="Lavire C."/>
            <person name="Marechal J."/>
            <person name="Martinez M."/>
            <person name="Mastronunzio J.E."/>
            <person name="Mullin B.C."/>
            <person name="Niemann J."/>
            <person name="Pujic P."/>
            <person name="Rawnsley T."/>
            <person name="Rouy Z."/>
            <person name="Schenowitz C."/>
            <person name="Sellstedt A."/>
            <person name="Tavares F."/>
            <person name="Tomkins J.P."/>
            <person name="Vallenet D."/>
            <person name="Valverde C."/>
            <person name="Wall L.G."/>
            <person name="Wang Y."/>
            <person name="Medigue C."/>
            <person name="Benson D.R."/>
        </authorList>
    </citation>
    <scope>NUCLEOTIDE SEQUENCE [LARGE SCALE GENOMIC DNA]</scope>
    <source>
        <strain>DSM 45986 / CECT 9034 / ACN14a</strain>
    </source>
</reference>
<feature type="chain" id="PRO_0000334302" description="Na(+)/H(+) antiporter NhaA 2">
    <location>
        <begin position="1"/>
        <end position="486"/>
    </location>
</feature>
<feature type="transmembrane region" description="Helical" evidence="1">
    <location>
        <begin position="58"/>
        <end position="78"/>
    </location>
</feature>
<feature type="transmembrane region" description="Helical" evidence="1">
    <location>
        <begin position="102"/>
        <end position="122"/>
    </location>
</feature>
<feature type="transmembrane region" description="Helical" evidence="1">
    <location>
        <begin position="138"/>
        <end position="158"/>
    </location>
</feature>
<feature type="transmembrane region" description="Helical" evidence="1">
    <location>
        <begin position="168"/>
        <end position="188"/>
    </location>
</feature>
<feature type="transmembrane region" description="Helical" evidence="1">
    <location>
        <begin position="198"/>
        <end position="218"/>
    </location>
</feature>
<feature type="transmembrane region" description="Helical" evidence="1">
    <location>
        <begin position="220"/>
        <end position="240"/>
    </location>
</feature>
<feature type="transmembrane region" description="Helical" evidence="1">
    <location>
        <begin position="260"/>
        <end position="280"/>
    </location>
</feature>
<feature type="transmembrane region" description="Helical" evidence="1">
    <location>
        <begin position="300"/>
        <end position="320"/>
    </location>
</feature>
<feature type="transmembrane region" description="Helical" evidence="1">
    <location>
        <begin position="338"/>
        <end position="358"/>
    </location>
</feature>
<feature type="transmembrane region" description="Helical" evidence="1">
    <location>
        <begin position="374"/>
        <end position="394"/>
    </location>
</feature>
<feature type="transmembrane region" description="Helical" evidence="1">
    <location>
        <begin position="404"/>
        <end position="424"/>
    </location>
</feature>
<feature type="region of interest" description="Disordered" evidence="2">
    <location>
        <begin position="432"/>
        <end position="486"/>
    </location>
</feature>
<comment type="function">
    <text evidence="1">Na(+)/H(+) antiporter that extrudes sodium in exchange for external protons.</text>
</comment>
<comment type="catalytic activity">
    <reaction evidence="1">
        <text>Na(+)(in) + 2 H(+)(out) = Na(+)(out) + 2 H(+)(in)</text>
        <dbReference type="Rhea" id="RHEA:29251"/>
        <dbReference type="ChEBI" id="CHEBI:15378"/>
        <dbReference type="ChEBI" id="CHEBI:29101"/>
    </reaction>
    <physiologicalReaction direction="left-to-right" evidence="1">
        <dbReference type="Rhea" id="RHEA:29252"/>
    </physiologicalReaction>
</comment>
<comment type="subcellular location">
    <subcellularLocation>
        <location evidence="1">Cell membrane</location>
        <topology evidence="1">Multi-pass membrane protein</topology>
    </subcellularLocation>
</comment>
<comment type="similarity">
    <text evidence="1">Belongs to the NhaA Na(+)/H(+) (TC 2.A.33) antiporter family.</text>
</comment>